<proteinExistence type="inferred from homology"/>
<sequence length="237" mass="26795">MTNELVYEGKAKRLFKTEEAGVLRVAYKDDATALNGVRKESFAGKGELNNQITSLIFSHLAGAGIESHFIRAISETEQLVKEVSIIPLEVVVRNVMAGSLAKRLGKEEGELIPNAIVEFYYKDDALDDPFINDDHVLYLELATTSEMDIIRQAARSINKVLQELFNQMNITLIDFKLEFGRDATGNILLADEISPDTCRLWDKETNQKLDKDVFRRNIGNLTDVYTEVLNRLKQVQN</sequence>
<protein>
    <recommendedName>
        <fullName evidence="1">Phosphoribosylaminoimidazole-succinocarboxamide synthase</fullName>
        <ecNumber evidence="1">6.3.2.6</ecNumber>
    </recommendedName>
    <alternativeName>
        <fullName evidence="1">SAICAR synthetase</fullName>
    </alternativeName>
</protein>
<name>PUR7_LISMC</name>
<gene>
    <name evidence="1" type="primary">purC</name>
    <name type="ordered locus">Lm4b_01786</name>
</gene>
<dbReference type="EC" id="6.3.2.6" evidence="1"/>
<dbReference type="EMBL" id="FM242711">
    <property type="protein sequence ID" value="CAS05546.1"/>
    <property type="molecule type" value="Genomic_DNA"/>
</dbReference>
<dbReference type="RefSeq" id="WP_003726214.1">
    <property type="nucleotide sequence ID" value="NC_012488.1"/>
</dbReference>
<dbReference type="SMR" id="C1KW71"/>
<dbReference type="KEGG" id="lmc:Lm4b_01786"/>
<dbReference type="HOGENOM" id="CLU_061495_2_0_9"/>
<dbReference type="UniPathway" id="UPA00074">
    <property type="reaction ID" value="UER00131"/>
</dbReference>
<dbReference type="GO" id="GO:0005524">
    <property type="term" value="F:ATP binding"/>
    <property type="evidence" value="ECO:0007669"/>
    <property type="project" value="UniProtKB-KW"/>
</dbReference>
<dbReference type="GO" id="GO:0004639">
    <property type="term" value="F:phosphoribosylaminoimidazolesuccinocarboxamide synthase activity"/>
    <property type="evidence" value="ECO:0007669"/>
    <property type="project" value="UniProtKB-UniRule"/>
</dbReference>
<dbReference type="GO" id="GO:0006189">
    <property type="term" value="P:'de novo' IMP biosynthetic process"/>
    <property type="evidence" value="ECO:0007669"/>
    <property type="project" value="UniProtKB-UniRule"/>
</dbReference>
<dbReference type="GO" id="GO:0009236">
    <property type="term" value="P:cobalamin biosynthetic process"/>
    <property type="evidence" value="ECO:0007669"/>
    <property type="project" value="InterPro"/>
</dbReference>
<dbReference type="CDD" id="cd01415">
    <property type="entry name" value="SAICAR_synt_PurC"/>
    <property type="match status" value="1"/>
</dbReference>
<dbReference type="FunFam" id="3.30.470.20:FF:000006">
    <property type="entry name" value="Phosphoribosylaminoimidazole-succinocarboxamide synthase"/>
    <property type="match status" value="1"/>
</dbReference>
<dbReference type="Gene3D" id="3.30.470.20">
    <property type="entry name" value="ATP-grasp fold, B domain"/>
    <property type="match status" value="1"/>
</dbReference>
<dbReference type="Gene3D" id="3.30.200.20">
    <property type="entry name" value="Phosphorylase Kinase, domain 1"/>
    <property type="match status" value="1"/>
</dbReference>
<dbReference type="HAMAP" id="MF_00137">
    <property type="entry name" value="SAICAR_synth"/>
    <property type="match status" value="1"/>
</dbReference>
<dbReference type="InterPro" id="IPR028923">
    <property type="entry name" value="SAICAR_synt/ADE2_N"/>
</dbReference>
<dbReference type="InterPro" id="IPR033934">
    <property type="entry name" value="SAICAR_synt_PurC"/>
</dbReference>
<dbReference type="InterPro" id="IPR001636">
    <property type="entry name" value="SAICAR_synth"/>
</dbReference>
<dbReference type="InterPro" id="IPR050089">
    <property type="entry name" value="SAICAR_synthetase"/>
</dbReference>
<dbReference type="InterPro" id="IPR018236">
    <property type="entry name" value="SAICAR_synthetase_CS"/>
</dbReference>
<dbReference type="NCBIfam" id="TIGR00081">
    <property type="entry name" value="purC"/>
    <property type="match status" value="1"/>
</dbReference>
<dbReference type="PANTHER" id="PTHR43599">
    <property type="entry name" value="MULTIFUNCTIONAL PROTEIN ADE2"/>
    <property type="match status" value="1"/>
</dbReference>
<dbReference type="PANTHER" id="PTHR43599:SF3">
    <property type="entry name" value="SI:DKEY-6E2.2"/>
    <property type="match status" value="1"/>
</dbReference>
<dbReference type="Pfam" id="PF01259">
    <property type="entry name" value="SAICAR_synt"/>
    <property type="match status" value="1"/>
</dbReference>
<dbReference type="SUPFAM" id="SSF56104">
    <property type="entry name" value="SAICAR synthase-like"/>
    <property type="match status" value="1"/>
</dbReference>
<dbReference type="PROSITE" id="PS01057">
    <property type="entry name" value="SAICAR_SYNTHETASE_1"/>
    <property type="match status" value="1"/>
</dbReference>
<dbReference type="PROSITE" id="PS01058">
    <property type="entry name" value="SAICAR_SYNTHETASE_2"/>
    <property type="match status" value="1"/>
</dbReference>
<keyword id="KW-0067">ATP-binding</keyword>
<keyword id="KW-0436">Ligase</keyword>
<keyword id="KW-0547">Nucleotide-binding</keyword>
<keyword id="KW-0658">Purine biosynthesis</keyword>
<feature type="chain" id="PRO_1000203233" description="Phosphoribosylaminoimidazole-succinocarboxamide synthase">
    <location>
        <begin position="1"/>
        <end position="237"/>
    </location>
</feature>
<reference key="1">
    <citation type="journal article" date="2012" name="BMC Genomics">
        <title>Comparative genomics and transcriptomics of lineages I, II, and III strains of Listeria monocytogenes.</title>
        <authorList>
            <person name="Hain T."/>
            <person name="Ghai R."/>
            <person name="Billion A."/>
            <person name="Kuenne C.T."/>
            <person name="Steinweg C."/>
            <person name="Izar B."/>
            <person name="Mohamed W."/>
            <person name="Mraheil M."/>
            <person name="Domann E."/>
            <person name="Schaffrath S."/>
            <person name="Karst U."/>
            <person name="Goesmann A."/>
            <person name="Oehm S."/>
            <person name="Puhler A."/>
            <person name="Merkl R."/>
            <person name="Vorwerk S."/>
            <person name="Glaser P."/>
            <person name="Garrido P."/>
            <person name="Rusniok C."/>
            <person name="Buchrieser C."/>
            <person name="Goebel W."/>
            <person name="Chakraborty T."/>
        </authorList>
    </citation>
    <scope>NUCLEOTIDE SEQUENCE [LARGE SCALE GENOMIC DNA]</scope>
    <source>
        <strain>CLIP80459</strain>
    </source>
</reference>
<organism>
    <name type="scientific">Listeria monocytogenes serotype 4b (strain CLIP80459)</name>
    <dbReference type="NCBI Taxonomy" id="568819"/>
    <lineage>
        <taxon>Bacteria</taxon>
        <taxon>Bacillati</taxon>
        <taxon>Bacillota</taxon>
        <taxon>Bacilli</taxon>
        <taxon>Bacillales</taxon>
        <taxon>Listeriaceae</taxon>
        <taxon>Listeria</taxon>
    </lineage>
</organism>
<evidence type="ECO:0000255" key="1">
    <source>
        <dbReference type="HAMAP-Rule" id="MF_00137"/>
    </source>
</evidence>
<comment type="catalytic activity">
    <reaction evidence="1">
        <text>5-amino-1-(5-phospho-D-ribosyl)imidazole-4-carboxylate + L-aspartate + ATP = (2S)-2-[5-amino-1-(5-phospho-beta-D-ribosyl)imidazole-4-carboxamido]succinate + ADP + phosphate + 2 H(+)</text>
        <dbReference type="Rhea" id="RHEA:22628"/>
        <dbReference type="ChEBI" id="CHEBI:15378"/>
        <dbReference type="ChEBI" id="CHEBI:29991"/>
        <dbReference type="ChEBI" id="CHEBI:30616"/>
        <dbReference type="ChEBI" id="CHEBI:43474"/>
        <dbReference type="ChEBI" id="CHEBI:58443"/>
        <dbReference type="ChEBI" id="CHEBI:77657"/>
        <dbReference type="ChEBI" id="CHEBI:456216"/>
        <dbReference type="EC" id="6.3.2.6"/>
    </reaction>
</comment>
<comment type="pathway">
    <text evidence="1">Purine metabolism; IMP biosynthesis via de novo pathway; 5-amino-1-(5-phospho-D-ribosyl)imidazole-4-carboxamide from 5-amino-1-(5-phospho-D-ribosyl)imidazole-4-carboxylate: step 1/2.</text>
</comment>
<comment type="similarity">
    <text evidence="1">Belongs to the SAICAR synthetase family.</text>
</comment>
<accession>C1KW71</accession>